<accession>Q1DZK8</accession>
<accession>J3KDK3</accession>
<name>DBP3_COCIM</name>
<proteinExistence type="inferred from homology"/>
<gene>
    <name type="primary">DBP3</name>
    <name type="ORF">CIMG_04255</name>
</gene>
<sequence>MAKRPLQTEANVERLPSELKRRKKKNSLKVTPGTVIGQNSKSRRNVPGMDDGNDKRASDSRYLPTPELSALPQSTIDEYLSSNSIHIADPSTDPSLRPITSFSFLPESSNDLYLPLEKFSSPTPIQAVSWPLAFAGRDLIGVAETGSGKTLAFGLPCLRRVLELNNSETSCKPCALIITPTRELAVQIYDQLLRFSSAVDVGIACIYGGSPKDHQRREIRNASVVIATPGRLKDFQADQTINLSGVKYLVLDEADRMLDKGFEQDIQDIVKGIPSTQKRQTIMFTATWPIGVRNLAASFTKNPVTVTIGDSSDIRANKRIKQMVEVLQPYEKDSRLLELLRRYQDGGKNNHRILVFCLYKKEAMRVERFIGSKGFKVAGIHGDMSQTERFRSLEAFKSGSISLLVATDVAARGLDIPAVKLVLNVTFPLTIEDYVHRIGRTGRAGAEGLAITLFTERDKALSGPLINVLRAADQDVPESLLKFGATVKKKQHESYGAFFREMDTTKVASRIKFED</sequence>
<reference key="1">
    <citation type="journal article" date="2009" name="Genome Res.">
        <title>Comparative genomic analyses of the human fungal pathogens Coccidioides and their relatives.</title>
        <authorList>
            <person name="Sharpton T.J."/>
            <person name="Stajich J.E."/>
            <person name="Rounsley S.D."/>
            <person name="Gardner M.J."/>
            <person name="Wortman J.R."/>
            <person name="Jordar V.S."/>
            <person name="Maiti R."/>
            <person name="Kodira C.D."/>
            <person name="Neafsey D.E."/>
            <person name="Zeng Q."/>
            <person name="Hung C.-Y."/>
            <person name="McMahan C."/>
            <person name="Muszewska A."/>
            <person name="Grynberg M."/>
            <person name="Mandel M.A."/>
            <person name="Kellner E.M."/>
            <person name="Barker B.M."/>
            <person name="Galgiani J.N."/>
            <person name="Orbach M.J."/>
            <person name="Kirkland T.N."/>
            <person name="Cole G.T."/>
            <person name="Henn M.R."/>
            <person name="Birren B.W."/>
            <person name="Taylor J.W."/>
        </authorList>
    </citation>
    <scope>NUCLEOTIDE SEQUENCE [LARGE SCALE GENOMIC DNA]</scope>
    <source>
        <strain>RS</strain>
    </source>
</reference>
<reference key="2">
    <citation type="journal article" date="2010" name="Genome Res.">
        <title>Population genomic sequencing of Coccidioides fungi reveals recent hybridization and transposon control.</title>
        <authorList>
            <person name="Neafsey D.E."/>
            <person name="Barker B.M."/>
            <person name="Sharpton T.J."/>
            <person name="Stajich J.E."/>
            <person name="Park D.J."/>
            <person name="Whiston E."/>
            <person name="Hung C.-Y."/>
            <person name="McMahan C."/>
            <person name="White J."/>
            <person name="Sykes S."/>
            <person name="Heiman D."/>
            <person name="Young S."/>
            <person name="Zeng Q."/>
            <person name="Abouelleil A."/>
            <person name="Aftuck L."/>
            <person name="Bessette D."/>
            <person name="Brown A."/>
            <person name="FitzGerald M."/>
            <person name="Lui A."/>
            <person name="Macdonald J.P."/>
            <person name="Priest M."/>
            <person name="Orbach M.J."/>
            <person name="Galgiani J.N."/>
            <person name="Kirkland T.N."/>
            <person name="Cole G.T."/>
            <person name="Birren B.W."/>
            <person name="Henn M.R."/>
            <person name="Taylor J.W."/>
            <person name="Rounsley S.D."/>
        </authorList>
    </citation>
    <scope>GENOME REANNOTATION</scope>
    <source>
        <strain>RS</strain>
    </source>
</reference>
<feature type="chain" id="PRO_0000255993" description="ATP-dependent RNA helicase DBP3">
    <location>
        <begin position="1"/>
        <end position="515"/>
    </location>
</feature>
<feature type="domain" description="Helicase ATP-binding" evidence="2">
    <location>
        <begin position="130"/>
        <end position="306"/>
    </location>
</feature>
<feature type="domain" description="Helicase C-terminal" evidence="3">
    <location>
        <begin position="335"/>
        <end position="484"/>
    </location>
</feature>
<feature type="region of interest" description="Disordered" evidence="4">
    <location>
        <begin position="1"/>
        <end position="67"/>
    </location>
</feature>
<feature type="short sequence motif" description="Q motif">
    <location>
        <begin position="100"/>
        <end position="127"/>
    </location>
</feature>
<feature type="short sequence motif" description="DEAD box">
    <location>
        <begin position="252"/>
        <end position="255"/>
    </location>
</feature>
<feature type="binding site" evidence="2">
    <location>
        <begin position="143"/>
        <end position="150"/>
    </location>
    <ligand>
        <name>ATP</name>
        <dbReference type="ChEBI" id="CHEBI:30616"/>
    </ligand>
</feature>
<dbReference type="EC" id="3.6.4.13"/>
<dbReference type="EMBL" id="GG704916">
    <property type="protein sequence ID" value="EAS33231.3"/>
    <property type="molecule type" value="Genomic_DNA"/>
</dbReference>
<dbReference type="RefSeq" id="XP_001244814.2">
    <property type="nucleotide sequence ID" value="XM_001244813.2"/>
</dbReference>
<dbReference type="SMR" id="Q1DZK8"/>
<dbReference type="FunCoup" id="Q1DZK8">
    <property type="interactions" value="375"/>
</dbReference>
<dbReference type="STRING" id="246410.Q1DZK8"/>
<dbReference type="GeneID" id="4565213"/>
<dbReference type="KEGG" id="cim:CIMG_04255"/>
<dbReference type="VEuPathDB" id="FungiDB:CIMG_04255"/>
<dbReference type="InParanoid" id="Q1DZK8"/>
<dbReference type="OMA" id="RGKNAMD"/>
<dbReference type="OrthoDB" id="196131at2759"/>
<dbReference type="Proteomes" id="UP000001261">
    <property type="component" value="Unassembled WGS sequence"/>
</dbReference>
<dbReference type="GO" id="GO:0005730">
    <property type="term" value="C:nucleolus"/>
    <property type="evidence" value="ECO:0007669"/>
    <property type="project" value="UniProtKB-SubCell"/>
</dbReference>
<dbReference type="GO" id="GO:0005524">
    <property type="term" value="F:ATP binding"/>
    <property type="evidence" value="ECO:0007669"/>
    <property type="project" value="UniProtKB-KW"/>
</dbReference>
<dbReference type="GO" id="GO:0016887">
    <property type="term" value="F:ATP hydrolysis activity"/>
    <property type="evidence" value="ECO:0007669"/>
    <property type="project" value="RHEA"/>
</dbReference>
<dbReference type="GO" id="GO:0003723">
    <property type="term" value="F:RNA binding"/>
    <property type="evidence" value="ECO:0007669"/>
    <property type="project" value="UniProtKB-KW"/>
</dbReference>
<dbReference type="GO" id="GO:0003724">
    <property type="term" value="F:RNA helicase activity"/>
    <property type="evidence" value="ECO:0007669"/>
    <property type="project" value="UniProtKB-EC"/>
</dbReference>
<dbReference type="GO" id="GO:0006364">
    <property type="term" value="P:rRNA processing"/>
    <property type="evidence" value="ECO:0007669"/>
    <property type="project" value="UniProtKB-KW"/>
</dbReference>
<dbReference type="CDD" id="cd00268">
    <property type="entry name" value="DEADc"/>
    <property type="match status" value="1"/>
</dbReference>
<dbReference type="CDD" id="cd18787">
    <property type="entry name" value="SF2_C_DEAD"/>
    <property type="match status" value="1"/>
</dbReference>
<dbReference type="FunFam" id="3.40.50.300:FF:000008">
    <property type="entry name" value="ATP-dependent RNA helicase RhlB"/>
    <property type="match status" value="1"/>
</dbReference>
<dbReference type="Gene3D" id="3.40.50.300">
    <property type="entry name" value="P-loop containing nucleotide triphosphate hydrolases"/>
    <property type="match status" value="2"/>
</dbReference>
<dbReference type="InterPro" id="IPR011545">
    <property type="entry name" value="DEAD/DEAH_box_helicase_dom"/>
</dbReference>
<dbReference type="InterPro" id="IPR014001">
    <property type="entry name" value="Helicase_ATP-bd"/>
</dbReference>
<dbReference type="InterPro" id="IPR001650">
    <property type="entry name" value="Helicase_C-like"/>
</dbReference>
<dbReference type="InterPro" id="IPR027417">
    <property type="entry name" value="P-loop_NTPase"/>
</dbReference>
<dbReference type="InterPro" id="IPR000629">
    <property type="entry name" value="RNA-helicase_DEAD-box_CS"/>
</dbReference>
<dbReference type="PANTHER" id="PTHR47958">
    <property type="entry name" value="ATP-DEPENDENT RNA HELICASE DBP3"/>
    <property type="match status" value="1"/>
</dbReference>
<dbReference type="Pfam" id="PF00270">
    <property type="entry name" value="DEAD"/>
    <property type="match status" value="1"/>
</dbReference>
<dbReference type="Pfam" id="PF00271">
    <property type="entry name" value="Helicase_C"/>
    <property type="match status" value="1"/>
</dbReference>
<dbReference type="SMART" id="SM00487">
    <property type="entry name" value="DEXDc"/>
    <property type="match status" value="1"/>
</dbReference>
<dbReference type="SMART" id="SM00490">
    <property type="entry name" value="HELICc"/>
    <property type="match status" value="1"/>
</dbReference>
<dbReference type="SUPFAM" id="SSF52540">
    <property type="entry name" value="P-loop containing nucleoside triphosphate hydrolases"/>
    <property type="match status" value="1"/>
</dbReference>
<dbReference type="PROSITE" id="PS00039">
    <property type="entry name" value="DEAD_ATP_HELICASE"/>
    <property type="match status" value="1"/>
</dbReference>
<dbReference type="PROSITE" id="PS51192">
    <property type="entry name" value="HELICASE_ATP_BIND_1"/>
    <property type="match status" value="1"/>
</dbReference>
<dbReference type="PROSITE" id="PS51194">
    <property type="entry name" value="HELICASE_CTER"/>
    <property type="match status" value="1"/>
</dbReference>
<organism>
    <name type="scientific">Coccidioides immitis (strain RS)</name>
    <name type="common">Valley fever fungus</name>
    <dbReference type="NCBI Taxonomy" id="246410"/>
    <lineage>
        <taxon>Eukaryota</taxon>
        <taxon>Fungi</taxon>
        <taxon>Dikarya</taxon>
        <taxon>Ascomycota</taxon>
        <taxon>Pezizomycotina</taxon>
        <taxon>Eurotiomycetes</taxon>
        <taxon>Eurotiomycetidae</taxon>
        <taxon>Onygenales</taxon>
        <taxon>Onygenaceae</taxon>
        <taxon>Coccidioides</taxon>
    </lineage>
</organism>
<evidence type="ECO:0000250" key="1"/>
<evidence type="ECO:0000255" key="2">
    <source>
        <dbReference type="PROSITE-ProRule" id="PRU00541"/>
    </source>
</evidence>
<evidence type="ECO:0000255" key="3">
    <source>
        <dbReference type="PROSITE-ProRule" id="PRU00542"/>
    </source>
</evidence>
<evidence type="ECO:0000256" key="4">
    <source>
        <dbReference type="SAM" id="MobiDB-lite"/>
    </source>
</evidence>
<evidence type="ECO:0000305" key="5"/>
<comment type="function">
    <text evidence="1">ATP-dependent RNA helicase required for 60S ribosomal subunit synthesis. Involved in efficient pre-rRNA processing, predominantly at site A3, which is necessary for the normal formation of 25S and 5.8S rRNAs (By similarity).</text>
</comment>
<comment type="catalytic activity">
    <reaction>
        <text>ATP + H2O = ADP + phosphate + H(+)</text>
        <dbReference type="Rhea" id="RHEA:13065"/>
        <dbReference type="ChEBI" id="CHEBI:15377"/>
        <dbReference type="ChEBI" id="CHEBI:15378"/>
        <dbReference type="ChEBI" id="CHEBI:30616"/>
        <dbReference type="ChEBI" id="CHEBI:43474"/>
        <dbReference type="ChEBI" id="CHEBI:456216"/>
        <dbReference type="EC" id="3.6.4.13"/>
    </reaction>
</comment>
<comment type="subcellular location">
    <subcellularLocation>
        <location evidence="1">Nucleus</location>
        <location evidence="1">Nucleolus</location>
    </subcellularLocation>
</comment>
<comment type="domain">
    <text>The Q motif is unique to and characteristic of the DEAD box family of RNA helicases and controls ATP binding and hydrolysis.</text>
</comment>
<comment type="similarity">
    <text evidence="5">Belongs to the DEAD box helicase family. DDX5/DBP2 subfamily.</text>
</comment>
<protein>
    <recommendedName>
        <fullName>ATP-dependent RNA helicase DBP3</fullName>
        <ecNumber>3.6.4.13</ecNumber>
    </recommendedName>
</protein>
<keyword id="KW-0067">ATP-binding</keyword>
<keyword id="KW-0347">Helicase</keyword>
<keyword id="KW-0378">Hydrolase</keyword>
<keyword id="KW-0547">Nucleotide-binding</keyword>
<keyword id="KW-0539">Nucleus</keyword>
<keyword id="KW-1185">Reference proteome</keyword>
<keyword id="KW-0690">Ribosome biogenesis</keyword>
<keyword id="KW-0694">RNA-binding</keyword>
<keyword id="KW-0698">rRNA processing</keyword>